<gene>
    <name evidence="1" type="primary">fmt</name>
    <name type="ordered locus">MGAS10750_Spy1447</name>
</gene>
<evidence type="ECO:0000255" key="1">
    <source>
        <dbReference type="HAMAP-Rule" id="MF_00182"/>
    </source>
</evidence>
<sequence length="311" mass="33648">MIKLLFMGTPQFSATVLKGLLDNPAYEILGVVTQPDRAVGRKKDIKVTPVKQLALEHGISIYQPEKLSGSQELIEIMGLGADGIITAAFGQFLPTLLLDSVSFAINVHASLLPKYRGGAPIHYAIMNGDKEAGVTIMEMIKEMDAGDMVAKASTPILETDNVGTLFEKLAIIGRDLLLDSLPAYLSGELKPIPQDHSQATFSPNISPEQEKLDWTMSNQEVFSHIRGMNPWPVAHTFLEGQRLKIYEAQLAEGEGLPGQVIVKTKKSLVIATGQGALSLIVVQPAGKPKMSIIDFLNGIGRKLEVGDIIGR</sequence>
<protein>
    <recommendedName>
        <fullName evidence="1">Methionyl-tRNA formyltransferase</fullName>
        <ecNumber evidence="1">2.1.2.9</ecNumber>
    </recommendedName>
</protein>
<feature type="chain" id="PRO_1000020180" description="Methionyl-tRNA formyltransferase">
    <location>
        <begin position="1"/>
        <end position="311"/>
    </location>
</feature>
<feature type="binding site" evidence="1">
    <location>
        <begin position="110"/>
        <end position="113"/>
    </location>
    <ligand>
        <name>(6S)-5,6,7,8-tetrahydrofolate</name>
        <dbReference type="ChEBI" id="CHEBI:57453"/>
    </ligand>
</feature>
<proteinExistence type="inferred from homology"/>
<accession>Q1J5I9</accession>
<reference key="1">
    <citation type="journal article" date="2006" name="Proc. Natl. Acad. Sci. U.S.A.">
        <title>Molecular genetic anatomy of inter- and intraserotype variation in the human bacterial pathogen group A Streptococcus.</title>
        <authorList>
            <person name="Beres S.B."/>
            <person name="Richter E.W."/>
            <person name="Nagiec M.J."/>
            <person name="Sumby P."/>
            <person name="Porcella S.F."/>
            <person name="DeLeo F.R."/>
            <person name="Musser J.M."/>
        </authorList>
    </citation>
    <scope>NUCLEOTIDE SEQUENCE [LARGE SCALE GENOMIC DNA]</scope>
    <source>
        <strain>MGAS10750</strain>
    </source>
</reference>
<name>FMT_STRPF</name>
<dbReference type="EC" id="2.1.2.9" evidence="1"/>
<dbReference type="EMBL" id="CP000262">
    <property type="protein sequence ID" value="ABF38397.1"/>
    <property type="molecule type" value="Genomic_DNA"/>
</dbReference>
<dbReference type="SMR" id="Q1J5I9"/>
<dbReference type="KEGG" id="spi:MGAS10750_Spy1447"/>
<dbReference type="HOGENOM" id="CLU_033347_1_1_9"/>
<dbReference type="Proteomes" id="UP000002434">
    <property type="component" value="Chromosome"/>
</dbReference>
<dbReference type="GO" id="GO:0005829">
    <property type="term" value="C:cytosol"/>
    <property type="evidence" value="ECO:0007669"/>
    <property type="project" value="TreeGrafter"/>
</dbReference>
<dbReference type="GO" id="GO:0004479">
    <property type="term" value="F:methionyl-tRNA formyltransferase activity"/>
    <property type="evidence" value="ECO:0007669"/>
    <property type="project" value="UniProtKB-UniRule"/>
</dbReference>
<dbReference type="CDD" id="cd08646">
    <property type="entry name" value="FMT_core_Met-tRNA-FMT_N"/>
    <property type="match status" value="1"/>
</dbReference>
<dbReference type="CDD" id="cd08704">
    <property type="entry name" value="Met_tRNA_FMT_C"/>
    <property type="match status" value="1"/>
</dbReference>
<dbReference type="FunFam" id="3.40.50.170:FF:000004">
    <property type="entry name" value="Methionyl-tRNA formyltransferase"/>
    <property type="match status" value="1"/>
</dbReference>
<dbReference type="Gene3D" id="3.10.25.10">
    <property type="entry name" value="Formyl transferase, C-terminal domain"/>
    <property type="match status" value="1"/>
</dbReference>
<dbReference type="Gene3D" id="3.40.50.170">
    <property type="entry name" value="Formyl transferase, N-terminal domain"/>
    <property type="match status" value="1"/>
</dbReference>
<dbReference type="HAMAP" id="MF_00182">
    <property type="entry name" value="Formyl_trans"/>
    <property type="match status" value="1"/>
</dbReference>
<dbReference type="InterPro" id="IPR005794">
    <property type="entry name" value="Fmt"/>
</dbReference>
<dbReference type="InterPro" id="IPR005793">
    <property type="entry name" value="Formyl_trans_C"/>
</dbReference>
<dbReference type="InterPro" id="IPR037022">
    <property type="entry name" value="Formyl_trans_C_sf"/>
</dbReference>
<dbReference type="InterPro" id="IPR002376">
    <property type="entry name" value="Formyl_transf_N"/>
</dbReference>
<dbReference type="InterPro" id="IPR036477">
    <property type="entry name" value="Formyl_transf_N_sf"/>
</dbReference>
<dbReference type="InterPro" id="IPR011034">
    <property type="entry name" value="Formyl_transferase-like_C_sf"/>
</dbReference>
<dbReference type="InterPro" id="IPR001555">
    <property type="entry name" value="GART_AS"/>
</dbReference>
<dbReference type="InterPro" id="IPR044135">
    <property type="entry name" value="Met-tRNA-FMT_C"/>
</dbReference>
<dbReference type="InterPro" id="IPR041711">
    <property type="entry name" value="Met-tRNA-FMT_N"/>
</dbReference>
<dbReference type="NCBIfam" id="TIGR00460">
    <property type="entry name" value="fmt"/>
    <property type="match status" value="1"/>
</dbReference>
<dbReference type="PANTHER" id="PTHR11138">
    <property type="entry name" value="METHIONYL-TRNA FORMYLTRANSFERASE"/>
    <property type="match status" value="1"/>
</dbReference>
<dbReference type="PANTHER" id="PTHR11138:SF5">
    <property type="entry name" value="METHIONYL-TRNA FORMYLTRANSFERASE, MITOCHONDRIAL"/>
    <property type="match status" value="1"/>
</dbReference>
<dbReference type="Pfam" id="PF02911">
    <property type="entry name" value="Formyl_trans_C"/>
    <property type="match status" value="1"/>
</dbReference>
<dbReference type="Pfam" id="PF00551">
    <property type="entry name" value="Formyl_trans_N"/>
    <property type="match status" value="1"/>
</dbReference>
<dbReference type="SUPFAM" id="SSF50486">
    <property type="entry name" value="FMT C-terminal domain-like"/>
    <property type="match status" value="1"/>
</dbReference>
<dbReference type="SUPFAM" id="SSF53328">
    <property type="entry name" value="Formyltransferase"/>
    <property type="match status" value="1"/>
</dbReference>
<dbReference type="PROSITE" id="PS00373">
    <property type="entry name" value="GART"/>
    <property type="match status" value="1"/>
</dbReference>
<keyword id="KW-0648">Protein biosynthesis</keyword>
<keyword id="KW-0808">Transferase</keyword>
<organism>
    <name type="scientific">Streptococcus pyogenes serotype M4 (strain MGAS10750)</name>
    <dbReference type="NCBI Taxonomy" id="370554"/>
    <lineage>
        <taxon>Bacteria</taxon>
        <taxon>Bacillati</taxon>
        <taxon>Bacillota</taxon>
        <taxon>Bacilli</taxon>
        <taxon>Lactobacillales</taxon>
        <taxon>Streptococcaceae</taxon>
        <taxon>Streptococcus</taxon>
    </lineage>
</organism>
<comment type="function">
    <text evidence="1">Attaches a formyl group to the free amino group of methionyl-tRNA(fMet). The formyl group appears to play a dual role in the initiator identity of N-formylmethionyl-tRNA by promoting its recognition by IF2 and preventing the misappropriation of this tRNA by the elongation apparatus.</text>
</comment>
<comment type="catalytic activity">
    <reaction evidence="1">
        <text>L-methionyl-tRNA(fMet) + (6R)-10-formyltetrahydrofolate = N-formyl-L-methionyl-tRNA(fMet) + (6S)-5,6,7,8-tetrahydrofolate + H(+)</text>
        <dbReference type="Rhea" id="RHEA:24380"/>
        <dbReference type="Rhea" id="RHEA-COMP:9952"/>
        <dbReference type="Rhea" id="RHEA-COMP:9953"/>
        <dbReference type="ChEBI" id="CHEBI:15378"/>
        <dbReference type="ChEBI" id="CHEBI:57453"/>
        <dbReference type="ChEBI" id="CHEBI:78530"/>
        <dbReference type="ChEBI" id="CHEBI:78844"/>
        <dbReference type="ChEBI" id="CHEBI:195366"/>
        <dbReference type="EC" id="2.1.2.9"/>
    </reaction>
</comment>
<comment type="similarity">
    <text evidence="1">Belongs to the Fmt family.</text>
</comment>